<comment type="function">
    <text evidence="3">Has phosphatase activity toward PtdIns(4,5)P2 and PtdIns(3,4,5)P3.</text>
</comment>
<comment type="catalytic activity">
    <reaction evidence="3">
        <text>a 1,2-diacyl-sn-glycero-3-phospho-(1D-myo-inositol-4,5-bisphosphate) + H2O = a 1,2-diacyl-sn-glycero-3-phospho-(1D-myo-inositol 4-phosphate) + phosphate</text>
        <dbReference type="Rhea" id="RHEA:22764"/>
        <dbReference type="ChEBI" id="CHEBI:15377"/>
        <dbReference type="ChEBI" id="CHEBI:43474"/>
        <dbReference type="ChEBI" id="CHEBI:58178"/>
        <dbReference type="ChEBI" id="CHEBI:58456"/>
        <dbReference type="EC" id="3.1.3.36"/>
    </reaction>
</comment>
<comment type="catalytic activity">
    <reaction evidence="3">
        <text>a 1,2-diacyl-sn-glycero-3-phospho-(1D-myo-inositol-3,4,5-trisphosphate) + H2O = a 1,2-diacyl-sn-glycero-3-phospho-(1D-myo-inositol-3,4-bisphosphate) + phosphate</text>
        <dbReference type="Rhea" id="RHEA:25528"/>
        <dbReference type="ChEBI" id="CHEBI:15377"/>
        <dbReference type="ChEBI" id="CHEBI:43474"/>
        <dbReference type="ChEBI" id="CHEBI:57658"/>
        <dbReference type="ChEBI" id="CHEBI:57836"/>
        <dbReference type="EC" id="3.1.3.86"/>
    </reaction>
</comment>
<comment type="alternative products">
    <event type="alternative splicing"/>
    <isoform>
        <id>Q8H0Z6-1</id>
        <name>1</name>
        <sequence type="displayed"/>
    </isoform>
    <text>A number of isoforms are produced. According to EST sequences.</text>
</comment>
<comment type="similarity">
    <text evidence="4">Belongs to the inositol polyphosphate 5-phosphatase family.</text>
</comment>
<comment type="sequence caution" evidence="4">
    <conflict type="erroneous gene model prediction">
        <sequence resource="EMBL-CDS" id="AAF43224"/>
    </conflict>
</comment>
<feature type="chain" id="PRO_0000433254" description="Type IV inositol polyphosphate 5-phosphatase 3">
    <location>
        <begin position="1"/>
        <end position="664"/>
    </location>
</feature>
<feature type="region of interest" description="Disordered" evidence="2">
    <location>
        <begin position="35"/>
        <end position="76"/>
    </location>
</feature>
<feature type="region of interest" description="Catalytic 1" evidence="1">
    <location>
        <begin position="514"/>
        <end position="529"/>
    </location>
</feature>
<feature type="region of interest" description="Catalytic 2" evidence="1">
    <location>
        <begin position="592"/>
        <end position="607"/>
    </location>
</feature>
<feature type="compositionally biased region" description="Acidic residues" evidence="2">
    <location>
        <begin position="40"/>
        <end position="66"/>
    </location>
</feature>
<feature type="sequence conflict" description="In Ref. 3; AAK82558." evidence="4" ref="3">
    <original>L</original>
    <variation>S</variation>
    <location>
        <position position="165"/>
    </location>
</feature>
<sequence length="664" mass="74780">MSPVEPAGIMKKSHRQKSQRLWAKLVMRKWLNISGRDPEYGADTDNESENEDAREDNDDSSSDEEGGSGSRGRESKVYENAEDAIAAASAVVDAAAAAAEFISNDAPMKLRRRNSETLRAQYINNKEIRVCVGTWNVGGISPPSDLDIDDWIEINQPADIYVLGLQEIVPLNAGNILGAEDDRPVAKWEEVIREALNRVRPKLSGVKSYSDPPSPGRFKPFEETHDIIEEEVAFESDSDAGVEIHPIDEEEEEETDRLWALKHDGGVIGEVKTLVDPNTGLPVVEIKRQFSIPKKLDRQLCLRADSFKGISDDDSTQTGMKTINRMLSGKERIGLSWPEPPLNMLGPCVLDRQPSIKTVKSLKTAKSFKAYSSFKSVAGNNNGIPPEVLALAEMDLKLLMERKRRPAYVRLVSKQMVGILLTIWVKRSLRKHIQNVRVSTVGVGVMGYIGNKGAVSVSMSINQTFFCFINTHLTAGEREVDQIKRNADVHEIHKRTVFHSVSALGLPKLIYDHERIIWLGDLNYRLSSSYEKTRDLISKREWSKLLEYDQLVKEYRKGRAFDGWSEGTLHFPPTYKYQANSDEYTANDGKAPKRTPAWCDRVLSYGKGMRLVHYRRTEQKFSDHRPVTAIYMAEVEVFSARKLQRALTFTDAEIEDEGLVAVLV</sequence>
<proteinExistence type="evidence at protein level"/>
<keyword id="KW-0025">Alternative splicing</keyword>
<keyword id="KW-0378">Hydrolase</keyword>
<keyword id="KW-1185">Reference proteome</keyword>
<reference key="1">
    <citation type="journal article" date="2000" name="Nature">
        <title>Sequence and analysis of chromosome 1 of the plant Arabidopsis thaliana.</title>
        <authorList>
            <person name="Theologis A."/>
            <person name="Ecker J.R."/>
            <person name="Palm C.J."/>
            <person name="Federspiel N.A."/>
            <person name="Kaul S."/>
            <person name="White O."/>
            <person name="Alonso J."/>
            <person name="Altafi H."/>
            <person name="Araujo R."/>
            <person name="Bowman C.L."/>
            <person name="Brooks S.Y."/>
            <person name="Buehler E."/>
            <person name="Chan A."/>
            <person name="Chao Q."/>
            <person name="Chen H."/>
            <person name="Cheuk R.F."/>
            <person name="Chin C.W."/>
            <person name="Chung M.K."/>
            <person name="Conn L."/>
            <person name="Conway A.B."/>
            <person name="Conway A.R."/>
            <person name="Creasy T.H."/>
            <person name="Dewar K."/>
            <person name="Dunn P."/>
            <person name="Etgu P."/>
            <person name="Feldblyum T.V."/>
            <person name="Feng J.-D."/>
            <person name="Fong B."/>
            <person name="Fujii C.Y."/>
            <person name="Gill J.E."/>
            <person name="Goldsmith A.D."/>
            <person name="Haas B."/>
            <person name="Hansen N.F."/>
            <person name="Hughes B."/>
            <person name="Huizar L."/>
            <person name="Hunter J.L."/>
            <person name="Jenkins J."/>
            <person name="Johnson-Hopson C."/>
            <person name="Khan S."/>
            <person name="Khaykin E."/>
            <person name="Kim C.J."/>
            <person name="Koo H.L."/>
            <person name="Kremenetskaia I."/>
            <person name="Kurtz D.B."/>
            <person name="Kwan A."/>
            <person name="Lam B."/>
            <person name="Langin-Hooper S."/>
            <person name="Lee A."/>
            <person name="Lee J.M."/>
            <person name="Lenz C.A."/>
            <person name="Li J.H."/>
            <person name="Li Y.-P."/>
            <person name="Lin X."/>
            <person name="Liu S.X."/>
            <person name="Liu Z.A."/>
            <person name="Luros J.S."/>
            <person name="Maiti R."/>
            <person name="Marziali A."/>
            <person name="Militscher J."/>
            <person name="Miranda M."/>
            <person name="Nguyen M."/>
            <person name="Nierman W.C."/>
            <person name="Osborne B.I."/>
            <person name="Pai G."/>
            <person name="Peterson J."/>
            <person name="Pham P.K."/>
            <person name="Rizzo M."/>
            <person name="Rooney T."/>
            <person name="Rowley D."/>
            <person name="Sakano H."/>
            <person name="Salzberg S.L."/>
            <person name="Schwartz J.R."/>
            <person name="Shinn P."/>
            <person name="Southwick A.M."/>
            <person name="Sun H."/>
            <person name="Tallon L.J."/>
            <person name="Tambunga G."/>
            <person name="Toriumi M.J."/>
            <person name="Town C.D."/>
            <person name="Utterback T."/>
            <person name="Van Aken S."/>
            <person name="Vaysberg M."/>
            <person name="Vysotskaia V.S."/>
            <person name="Walker M."/>
            <person name="Wu D."/>
            <person name="Yu G."/>
            <person name="Fraser C.M."/>
            <person name="Venter J.C."/>
            <person name="Davis R.W."/>
        </authorList>
    </citation>
    <scope>NUCLEOTIDE SEQUENCE [LARGE SCALE GENOMIC DNA]</scope>
    <source>
        <strain>cv. Columbia</strain>
    </source>
</reference>
<reference key="2">
    <citation type="journal article" date="2017" name="Plant J.">
        <title>Araport11: a complete reannotation of the Arabidopsis thaliana reference genome.</title>
        <authorList>
            <person name="Cheng C.Y."/>
            <person name="Krishnakumar V."/>
            <person name="Chan A.P."/>
            <person name="Thibaud-Nissen F."/>
            <person name="Schobel S."/>
            <person name="Town C.D."/>
        </authorList>
    </citation>
    <scope>GENOME REANNOTATION</scope>
    <source>
        <strain>cv. Columbia</strain>
    </source>
</reference>
<reference key="3">
    <citation type="journal article" date="2003" name="Science">
        <title>Empirical analysis of transcriptional activity in the Arabidopsis genome.</title>
        <authorList>
            <person name="Yamada K."/>
            <person name="Lim J."/>
            <person name="Dale J.M."/>
            <person name="Chen H."/>
            <person name="Shinn P."/>
            <person name="Palm C.J."/>
            <person name="Southwick A.M."/>
            <person name="Wu H.C."/>
            <person name="Kim C.J."/>
            <person name="Nguyen M."/>
            <person name="Pham P.K."/>
            <person name="Cheuk R.F."/>
            <person name="Karlin-Newmann G."/>
            <person name="Liu S.X."/>
            <person name="Lam B."/>
            <person name="Sakano H."/>
            <person name="Wu T."/>
            <person name="Yu G."/>
            <person name="Miranda M."/>
            <person name="Quach H.L."/>
            <person name="Tripp M."/>
            <person name="Chang C.H."/>
            <person name="Lee J.M."/>
            <person name="Toriumi M.J."/>
            <person name="Chan M.M."/>
            <person name="Tang C.C."/>
            <person name="Onodera C.S."/>
            <person name="Deng J.M."/>
            <person name="Akiyama K."/>
            <person name="Ansari Y."/>
            <person name="Arakawa T."/>
            <person name="Banh J."/>
            <person name="Banno F."/>
            <person name="Bowser L."/>
            <person name="Brooks S.Y."/>
            <person name="Carninci P."/>
            <person name="Chao Q."/>
            <person name="Choy N."/>
            <person name="Enju A."/>
            <person name="Goldsmith A.D."/>
            <person name="Gurjal M."/>
            <person name="Hansen N.F."/>
            <person name="Hayashizaki Y."/>
            <person name="Johnson-Hopson C."/>
            <person name="Hsuan V.W."/>
            <person name="Iida K."/>
            <person name="Karnes M."/>
            <person name="Khan S."/>
            <person name="Koesema E."/>
            <person name="Ishida J."/>
            <person name="Jiang P.X."/>
            <person name="Jones T."/>
            <person name="Kawai J."/>
            <person name="Kamiya A."/>
            <person name="Meyers C."/>
            <person name="Nakajima M."/>
            <person name="Narusaka M."/>
            <person name="Seki M."/>
            <person name="Sakurai T."/>
            <person name="Satou M."/>
            <person name="Tamse R."/>
            <person name="Vaysberg M."/>
            <person name="Wallender E.K."/>
            <person name="Wong C."/>
            <person name="Yamamura Y."/>
            <person name="Yuan S."/>
            <person name="Shinozaki K."/>
            <person name="Davis R.W."/>
            <person name="Theologis A."/>
            <person name="Ecker J.R."/>
        </authorList>
    </citation>
    <scope>NUCLEOTIDE SEQUENCE [LARGE SCALE MRNA]</scope>
    <source>
        <strain>cv. Columbia</strain>
    </source>
</reference>
<reference key="4">
    <citation type="journal article" date="2001" name="Plant Physiol.">
        <title>Molecular characterization of At5PTase1, an inositol phosphatase capable of terminating inositol trisphosphate signaling.</title>
        <authorList>
            <person name="Berdy S.E."/>
            <person name="Kudla J."/>
            <person name="Gruissem W."/>
            <person name="Gillaspy G.E."/>
        </authorList>
    </citation>
    <scope>GENE FAMILY</scope>
</reference>
<reference key="5">
    <citation type="journal article" date="2009" name="Plant Physiol.">
        <title>Large-scale Arabidopsis phosphoproteome profiling reveals novel chloroplast kinase substrates and phosphorylation networks.</title>
        <authorList>
            <person name="Reiland S."/>
            <person name="Messerli G."/>
            <person name="Baerenfaller K."/>
            <person name="Gerrits B."/>
            <person name="Endler A."/>
            <person name="Grossmann J."/>
            <person name="Gruissem W."/>
            <person name="Baginsky S."/>
        </authorList>
    </citation>
    <scope>IDENTIFICATION BY MASS SPECTROMETRY [LARGE SCALE ANALYSIS]</scope>
</reference>
<reference key="6">
    <citation type="journal article" date="2011" name="Plant Physiol.">
        <title>Inositol polyphosphate 5-phosphatase7 regulates the production of reactive oxygen species and salt tolerance in Arabidopsis.</title>
        <authorList>
            <person name="Kaye Y."/>
            <person name="Golani Y."/>
            <person name="Singer Y."/>
            <person name="Leshem Y."/>
            <person name="Cohen G."/>
            <person name="Ercetin M."/>
            <person name="Gillaspy G."/>
            <person name="Levine A."/>
        </authorList>
    </citation>
    <scope>CATALYTIC ACTIVITY</scope>
    <scope>FUNCTION</scope>
</reference>
<protein>
    <recommendedName>
        <fullName evidence="4">Type IV inositol polyphosphate 5-phosphatase 3</fullName>
        <shortName evidence="4">At5PTase3</shortName>
        <ecNumber evidence="3">3.1.3.36</ecNumber>
        <ecNumber evidence="3">3.1.3.86</ecNumber>
    </recommendedName>
</protein>
<gene>
    <name evidence="4" type="primary">IP5P3</name>
    <name evidence="5" type="ordered locus">At1g71710</name>
    <name evidence="6" type="ORF">F14O23_9</name>
    <name evidence="7" type="ORF">F26A9.1</name>
</gene>
<evidence type="ECO:0000250" key="1">
    <source>
        <dbReference type="UniProtKB" id="Q84MA2"/>
    </source>
</evidence>
<evidence type="ECO:0000256" key="2">
    <source>
        <dbReference type="SAM" id="MobiDB-lite"/>
    </source>
</evidence>
<evidence type="ECO:0000269" key="3">
    <source>
    </source>
</evidence>
<evidence type="ECO:0000305" key="4"/>
<evidence type="ECO:0000312" key="5">
    <source>
        <dbReference type="Araport" id="AT1G71710"/>
    </source>
</evidence>
<evidence type="ECO:0000312" key="6">
    <source>
        <dbReference type="EMBL" id="AAF43224.1"/>
    </source>
</evidence>
<evidence type="ECO:0000312" key="7">
    <source>
        <dbReference type="EMBL" id="AAG51823.1"/>
    </source>
</evidence>
<organism>
    <name type="scientific">Arabidopsis thaliana</name>
    <name type="common">Mouse-ear cress</name>
    <dbReference type="NCBI Taxonomy" id="3702"/>
    <lineage>
        <taxon>Eukaryota</taxon>
        <taxon>Viridiplantae</taxon>
        <taxon>Streptophyta</taxon>
        <taxon>Embryophyta</taxon>
        <taxon>Tracheophyta</taxon>
        <taxon>Spermatophyta</taxon>
        <taxon>Magnoliopsida</taxon>
        <taxon>eudicotyledons</taxon>
        <taxon>Gunneridae</taxon>
        <taxon>Pentapetalae</taxon>
        <taxon>rosids</taxon>
        <taxon>malvids</taxon>
        <taxon>Brassicales</taxon>
        <taxon>Brassicaceae</taxon>
        <taxon>Camelineae</taxon>
        <taxon>Arabidopsis</taxon>
    </lineage>
</organism>
<accession>Q8H0Z6</accession>
<accession>Q94AB6</accession>
<accession>Q9C9J4</accession>
<accession>Q9M9H5</accession>
<dbReference type="EC" id="3.1.3.36" evidence="3"/>
<dbReference type="EC" id="3.1.3.86" evidence="3"/>
<dbReference type="EMBL" id="AC012654">
    <property type="protein sequence ID" value="AAF43224.1"/>
    <property type="status" value="ALT_SEQ"/>
    <property type="molecule type" value="Genomic_DNA"/>
</dbReference>
<dbReference type="EMBL" id="AC016163">
    <property type="protein sequence ID" value="AAG51823.1"/>
    <property type="molecule type" value="Genomic_DNA"/>
</dbReference>
<dbReference type="EMBL" id="CP002684">
    <property type="protein sequence ID" value="AEE35221.1"/>
    <property type="molecule type" value="Genomic_DNA"/>
</dbReference>
<dbReference type="EMBL" id="AY048296">
    <property type="protein sequence ID" value="AAK82558.1"/>
    <property type="molecule type" value="mRNA"/>
</dbReference>
<dbReference type="EMBL" id="BT001070">
    <property type="protein sequence ID" value="AAN46835.1"/>
    <property type="molecule type" value="mRNA"/>
</dbReference>
<dbReference type="PIR" id="D96739">
    <property type="entry name" value="D96739"/>
</dbReference>
<dbReference type="RefSeq" id="NP_565023.1">
    <molecule id="Q8H0Z6-1"/>
    <property type="nucleotide sequence ID" value="NM_105829.4"/>
</dbReference>
<dbReference type="SMR" id="Q8H0Z6"/>
<dbReference type="FunCoup" id="Q8H0Z6">
    <property type="interactions" value="2992"/>
</dbReference>
<dbReference type="STRING" id="3702.Q8H0Z6"/>
<dbReference type="iPTMnet" id="Q8H0Z6"/>
<dbReference type="PaxDb" id="3702-AT1G71710.1"/>
<dbReference type="ProteomicsDB" id="228822">
    <molecule id="Q8H0Z6-1"/>
</dbReference>
<dbReference type="EnsemblPlants" id="AT1G71710.1">
    <molecule id="Q8H0Z6-1"/>
    <property type="protein sequence ID" value="AT1G71710.1"/>
    <property type="gene ID" value="AT1G71710"/>
</dbReference>
<dbReference type="GeneID" id="843501"/>
<dbReference type="Gramene" id="AT1G71710.1">
    <molecule id="Q8H0Z6-1"/>
    <property type="protein sequence ID" value="AT1G71710.1"/>
    <property type="gene ID" value="AT1G71710"/>
</dbReference>
<dbReference type="KEGG" id="ath:AT1G71710"/>
<dbReference type="Araport" id="AT1G71710"/>
<dbReference type="TAIR" id="AT1G71710"/>
<dbReference type="eggNOG" id="KOG0565">
    <property type="taxonomic scope" value="Eukaryota"/>
</dbReference>
<dbReference type="InParanoid" id="Q8H0Z6"/>
<dbReference type="PhylomeDB" id="Q8H0Z6"/>
<dbReference type="BioCyc" id="ARA:AT1G71710-MONOMER"/>
<dbReference type="PRO" id="PR:Q8H0Z6"/>
<dbReference type="Proteomes" id="UP000006548">
    <property type="component" value="Chromosome 1"/>
</dbReference>
<dbReference type="ExpressionAtlas" id="Q8H0Z6">
    <property type="expression patterns" value="baseline and differential"/>
</dbReference>
<dbReference type="GO" id="GO:0004445">
    <property type="term" value="F:inositol-polyphosphate 5-phosphatase activity"/>
    <property type="evidence" value="ECO:0007669"/>
    <property type="project" value="InterPro"/>
</dbReference>
<dbReference type="GO" id="GO:0034485">
    <property type="term" value="F:phosphatidylinositol-3,4,5-trisphosphate 5-phosphatase activity"/>
    <property type="evidence" value="ECO:0000314"/>
    <property type="project" value="UniProtKB"/>
</dbReference>
<dbReference type="GO" id="GO:0004439">
    <property type="term" value="F:phosphatidylinositol-4,5-bisphosphate 5-phosphatase activity"/>
    <property type="evidence" value="ECO:0000314"/>
    <property type="project" value="UniProtKB"/>
</dbReference>
<dbReference type="GO" id="GO:0046856">
    <property type="term" value="P:phosphatidylinositol dephosphorylation"/>
    <property type="evidence" value="ECO:0000314"/>
    <property type="project" value="UniProtKB"/>
</dbReference>
<dbReference type="FunFam" id="3.60.10.10:FF:000014">
    <property type="entry name" value="Type I inositol polyphosphate 5-phosphatase 1"/>
    <property type="match status" value="1"/>
</dbReference>
<dbReference type="FunFam" id="3.60.10.10:FF:000038">
    <property type="entry name" value="type IV inositol polyphosphate 5-phosphatase 3"/>
    <property type="match status" value="1"/>
</dbReference>
<dbReference type="Gene3D" id="3.60.10.10">
    <property type="entry name" value="Endonuclease/exonuclease/phosphatase"/>
    <property type="match status" value="2"/>
</dbReference>
<dbReference type="InterPro" id="IPR036691">
    <property type="entry name" value="Endo/exonu/phosph_ase_sf"/>
</dbReference>
<dbReference type="InterPro" id="IPR045849">
    <property type="entry name" value="IP5P_plant"/>
</dbReference>
<dbReference type="InterPro" id="IPR000300">
    <property type="entry name" value="IPPc"/>
</dbReference>
<dbReference type="PANTHER" id="PTHR45666:SF5">
    <property type="entry name" value="TYPE IV INOSITOL POLYPHOSPHATE 5-PHOSPHATASE 3"/>
    <property type="match status" value="1"/>
</dbReference>
<dbReference type="PANTHER" id="PTHR45666">
    <property type="entry name" value="TYPE IV INOSITOL POLYPHOSPHATE 5-PHOSPHATASE 9"/>
    <property type="match status" value="1"/>
</dbReference>
<dbReference type="Pfam" id="PF22669">
    <property type="entry name" value="Exo_endo_phos2"/>
    <property type="match status" value="2"/>
</dbReference>
<dbReference type="SMART" id="SM00128">
    <property type="entry name" value="IPPc"/>
    <property type="match status" value="1"/>
</dbReference>
<dbReference type="SUPFAM" id="SSF56219">
    <property type="entry name" value="DNase I-like"/>
    <property type="match status" value="2"/>
</dbReference>
<name>IP5P3_ARATH</name>